<name>RL27_ACTPJ</name>
<evidence type="ECO:0000255" key="1">
    <source>
        <dbReference type="HAMAP-Rule" id="MF_00539"/>
    </source>
</evidence>
<evidence type="ECO:0000256" key="2">
    <source>
        <dbReference type="SAM" id="MobiDB-lite"/>
    </source>
</evidence>
<evidence type="ECO:0000305" key="3"/>
<keyword id="KW-0687">Ribonucleoprotein</keyword>
<keyword id="KW-0689">Ribosomal protein</keyword>
<dbReference type="EMBL" id="CP000687">
    <property type="protein sequence ID" value="ABY70593.1"/>
    <property type="molecule type" value="Genomic_DNA"/>
</dbReference>
<dbReference type="RefSeq" id="WP_005599816.1">
    <property type="nucleotide sequence ID" value="NC_010278.1"/>
</dbReference>
<dbReference type="SMR" id="B0BU26"/>
<dbReference type="GeneID" id="48600302"/>
<dbReference type="KEGG" id="apj:APJL_2048"/>
<dbReference type="HOGENOM" id="CLU_095424_4_1_6"/>
<dbReference type="Proteomes" id="UP000008547">
    <property type="component" value="Chromosome"/>
</dbReference>
<dbReference type="GO" id="GO:0022625">
    <property type="term" value="C:cytosolic large ribosomal subunit"/>
    <property type="evidence" value="ECO:0007669"/>
    <property type="project" value="TreeGrafter"/>
</dbReference>
<dbReference type="GO" id="GO:0003735">
    <property type="term" value="F:structural constituent of ribosome"/>
    <property type="evidence" value="ECO:0007669"/>
    <property type="project" value="InterPro"/>
</dbReference>
<dbReference type="GO" id="GO:0006412">
    <property type="term" value="P:translation"/>
    <property type="evidence" value="ECO:0007669"/>
    <property type="project" value="UniProtKB-UniRule"/>
</dbReference>
<dbReference type="FunFam" id="2.40.50.100:FF:000001">
    <property type="entry name" value="50S ribosomal protein L27"/>
    <property type="match status" value="1"/>
</dbReference>
<dbReference type="Gene3D" id="2.40.50.100">
    <property type="match status" value="1"/>
</dbReference>
<dbReference type="HAMAP" id="MF_00539">
    <property type="entry name" value="Ribosomal_bL27"/>
    <property type="match status" value="1"/>
</dbReference>
<dbReference type="InterPro" id="IPR001684">
    <property type="entry name" value="Ribosomal_bL27"/>
</dbReference>
<dbReference type="InterPro" id="IPR018261">
    <property type="entry name" value="Ribosomal_bL27_CS"/>
</dbReference>
<dbReference type="NCBIfam" id="TIGR00062">
    <property type="entry name" value="L27"/>
    <property type="match status" value="1"/>
</dbReference>
<dbReference type="PANTHER" id="PTHR15893:SF0">
    <property type="entry name" value="LARGE RIBOSOMAL SUBUNIT PROTEIN BL27M"/>
    <property type="match status" value="1"/>
</dbReference>
<dbReference type="PANTHER" id="PTHR15893">
    <property type="entry name" value="RIBOSOMAL PROTEIN L27"/>
    <property type="match status" value="1"/>
</dbReference>
<dbReference type="Pfam" id="PF01016">
    <property type="entry name" value="Ribosomal_L27"/>
    <property type="match status" value="1"/>
</dbReference>
<dbReference type="PRINTS" id="PR00063">
    <property type="entry name" value="RIBOSOMALL27"/>
</dbReference>
<dbReference type="SUPFAM" id="SSF110324">
    <property type="entry name" value="Ribosomal L27 protein-like"/>
    <property type="match status" value="1"/>
</dbReference>
<dbReference type="PROSITE" id="PS00831">
    <property type="entry name" value="RIBOSOMAL_L27"/>
    <property type="match status" value="1"/>
</dbReference>
<organism>
    <name type="scientific">Actinobacillus pleuropneumoniae serotype 3 (strain JL03)</name>
    <dbReference type="NCBI Taxonomy" id="434271"/>
    <lineage>
        <taxon>Bacteria</taxon>
        <taxon>Pseudomonadati</taxon>
        <taxon>Pseudomonadota</taxon>
        <taxon>Gammaproteobacteria</taxon>
        <taxon>Pasteurellales</taxon>
        <taxon>Pasteurellaceae</taxon>
        <taxon>Actinobacillus</taxon>
    </lineage>
</organism>
<accession>B0BU26</accession>
<reference key="1">
    <citation type="journal article" date="2008" name="PLoS ONE">
        <title>Genome biology of Actinobacillus pleuropneumoniae JL03, an isolate of serotype 3 prevalent in China.</title>
        <authorList>
            <person name="Xu Z."/>
            <person name="Zhou Y."/>
            <person name="Li L."/>
            <person name="Zhou R."/>
            <person name="Xiao S."/>
            <person name="Wan Y."/>
            <person name="Zhang S."/>
            <person name="Wang K."/>
            <person name="Li W."/>
            <person name="Li L."/>
            <person name="Jin H."/>
            <person name="Kang M."/>
            <person name="Dalai B."/>
            <person name="Li T."/>
            <person name="Liu L."/>
            <person name="Cheng Y."/>
            <person name="Zhang L."/>
            <person name="Xu T."/>
            <person name="Zheng H."/>
            <person name="Pu S."/>
            <person name="Wang B."/>
            <person name="Gu W."/>
            <person name="Zhang X.L."/>
            <person name="Zhu G.-F."/>
            <person name="Wang S."/>
            <person name="Zhao G.-P."/>
            <person name="Chen H."/>
        </authorList>
    </citation>
    <scope>NUCLEOTIDE SEQUENCE [LARGE SCALE GENOMIC DNA]</scope>
    <source>
        <strain>JL03</strain>
    </source>
</reference>
<sequence length="85" mass="9108">MATKKAGGSTRNGRDSEAKRLGVKRFGGESVLAGSIIVRQRGTKFHAGNNVGMGKDHTLFATADGKVKFEVKGEKNRKYVSIVAE</sequence>
<feature type="chain" id="PRO_1000128683" description="Large ribosomal subunit protein bL27">
    <location>
        <begin position="1"/>
        <end position="85"/>
    </location>
</feature>
<feature type="region of interest" description="Disordered" evidence="2">
    <location>
        <begin position="1"/>
        <end position="20"/>
    </location>
</feature>
<comment type="similarity">
    <text evidence="1">Belongs to the bacterial ribosomal protein bL27 family.</text>
</comment>
<proteinExistence type="inferred from homology"/>
<gene>
    <name evidence="1" type="primary">rpmA</name>
    <name type="ordered locus">APJL_2048</name>
</gene>
<protein>
    <recommendedName>
        <fullName evidence="1">Large ribosomal subunit protein bL27</fullName>
    </recommendedName>
    <alternativeName>
        <fullName evidence="3">50S ribosomal protein L27</fullName>
    </alternativeName>
</protein>